<comment type="function">
    <text evidence="1">Catalyzes the transfer of the L-Ara4N moiety of the glycolipid undecaprenyl phosphate-alpha-L-Ara4N to lipid A. The modified arabinose is attached to lipid A and is required for resistance to polymyxin and cationic antimicrobial peptides.</text>
</comment>
<comment type="catalytic activity">
    <reaction evidence="1">
        <text>4-amino-4-deoxy-alpha-L-arabinopyranosyl di-trans,octa-cis-undecaprenyl phosphate + lipid IVA = lipid IIA + di-trans,octa-cis-undecaprenyl phosphate.</text>
        <dbReference type="EC" id="2.4.2.43"/>
    </reaction>
</comment>
<comment type="pathway">
    <text evidence="1">Lipopolysaccharide metabolism; 4-amino-4-deoxy-beta-L-arabinose-lipid A biosynthesis.</text>
</comment>
<comment type="subcellular location">
    <subcellularLocation>
        <location evidence="1">Cell inner membrane</location>
        <topology evidence="1">Multi-pass membrane protein</topology>
    </subcellularLocation>
</comment>
<comment type="similarity">
    <text evidence="1">Belongs to the glycosyltransferase 83 family.</text>
</comment>
<sequence length="550" mass="62574">MKSVRYLIGLFAFIACYYLLPISTRLLWQPDETRYAEISREMLASGDWIVPHLLGLRYFEKPIAGYWINSIGQWLFGANNFGVRAGVIFATLLTTALVTWFTLRLWRDKRLALLATVIYLSLFIVYAIGTYAVLDPFIAFWLVAGMCSFWLAMQAQTWKGKSAGFLLLGITCGMGVMTKGFLALAVPVLSVLPWVATQKRWKDLFIYGWLAVISCVLTVLPWGLAIAQREPDFWHYFFWVEHIQRFALDDAQHRAPFWYYVPVIIAGSLPWLGLLPGALYTGWKNRKHSATVYLLSWTIMPLLFFSVAKGKLPTYILSCFASLAMLMAHYALLAAKNNPLALRINGWINIAFGVTGIIATFVVSPWGPMNTPVWQTFESYKVFCAWSIFSLWAFFGWYTLTNVEKTWPFAALCPLGLALLVGFSIPDRVMEGKHPQFFVEMTQESLQPSRYILTDSVGVAAGLAWSLQRDDIIMYRQTGELKYGLNYPDAKGRFVSGDEFANWLNQHRQEGIITLVLSVDRDEDINSLAIPPADAIDRQERLVLIQYRPK</sequence>
<feature type="chain" id="PRO_0000379994" description="Undecaprenyl phosphate-alpha-4-amino-4-deoxy-L-arabinose arabinosyl transferase">
    <location>
        <begin position="1"/>
        <end position="550"/>
    </location>
</feature>
<feature type="transmembrane region" description="Helical" evidence="1">
    <location>
        <begin position="7"/>
        <end position="27"/>
    </location>
</feature>
<feature type="transmembrane region" description="Helical" evidence="1">
    <location>
        <begin position="81"/>
        <end position="101"/>
    </location>
</feature>
<feature type="transmembrane region" description="Helical" evidence="1">
    <location>
        <begin position="111"/>
        <end position="133"/>
    </location>
</feature>
<feature type="transmembrane region" description="Helical" evidence="1">
    <location>
        <begin position="137"/>
        <end position="154"/>
    </location>
</feature>
<feature type="transmembrane region" description="Helical" evidence="1">
    <location>
        <begin position="165"/>
        <end position="185"/>
    </location>
</feature>
<feature type="transmembrane region" description="Helical" evidence="1">
    <location>
        <begin position="204"/>
        <end position="224"/>
    </location>
</feature>
<feature type="transmembrane region" description="Helical" evidence="1">
    <location>
        <begin position="255"/>
        <end position="275"/>
    </location>
</feature>
<feature type="transmembrane region" description="Helical" evidence="1">
    <location>
        <begin position="288"/>
        <end position="308"/>
    </location>
</feature>
<feature type="transmembrane region" description="Helical" evidence="1">
    <location>
        <begin position="315"/>
        <end position="335"/>
    </location>
</feature>
<feature type="transmembrane region" description="Helical" evidence="1">
    <location>
        <begin position="346"/>
        <end position="366"/>
    </location>
</feature>
<feature type="transmembrane region" description="Helical" evidence="1">
    <location>
        <begin position="382"/>
        <end position="402"/>
    </location>
</feature>
<feature type="transmembrane region" description="Helical" evidence="1">
    <location>
        <begin position="406"/>
        <end position="426"/>
    </location>
</feature>
<protein>
    <recommendedName>
        <fullName evidence="1">Undecaprenyl phosphate-alpha-4-amino-4-deoxy-L-arabinose arabinosyl transferase</fullName>
        <ecNumber evidence="1">2.4.2.43</ecNumber>
    </recommendedName>
    <alternativeName>
        <fullName evidence="1">4-amino-4-deoxy-L-arabinose lipid A transferase</fullName>
    </alternativeName>
    <alternativeName>
        <fullName evidence="1">Lipid IV(A) 4-amino-4-deoxy-L-arabinosyltransferase</fullName>
    </alternativeName>
    <alternativeName>
        <fullName evidence="1">Undecaprenyl phosphate-alpha-L-Ara4N transferase</fullName>
    </alternativeName>
</protein>
<gene>
    <name evidence="1" type="primary">arnT</name>
    <name type="ordered locus">EcE24377A_2552</name>
</gene>
<evidence type="ECO:0000255" key="1">
    <source>
        <dbReference type="HAMAP-Rule" id="MF_01165"/>
    </source>
</evidence>
<proteinExistence type="inferred from homology"/>
<dbReference type="EC" id="2.4.2.43" evidence="1"/>
<dbReference type="EMBL" id="CP000800">
    <property type="protein sequence ID" value="ABV16703.1"/>
    <property type="molecule type" value="Genomic_DNA"/>
</dbReference>
<dbReference type="RefSeq" id="WP_000844072.1">
    <property type="nucleotide sequence ID" value="NC_009801.1"/>
</dbReference>
<dbReference type="SMR" id="A7ZP75"/>
<dbReference type="CAZy" id="GT83">
    <property type="family name" value="Glycosyltransferase Family 83"/>
</dbReference>
<dbReference type="KEGG" id="ecw:EcE24377A_2552"/>
<dbReference type="HOGENOM" id="CLU_019200_2_1_6"/>
<dbReference type="UniPathway" id="UPA00037"/>
<dbReference type="Proteomes" id="UP000001122">
    <property type="component" value="Chromosome"/>
</dbReference>
<dbReference type="GO" id="GO:0005886">
    <property type="term" value="C:plasma membrane"/>
    <property type="evidence" value="ECO:0007669"/>
    <property type="project" value="UniProtKB-SubCell"/>
</dbReference>
<dbReference type="GO" id="GO:0103015">
    <property type="term" value="F:4-amino-4-deoxy-L-arabinose transferase activity"/>
    <property type="evidence" value="ECO:0007669"/>
    <property type="project" value="UniProtKB-EC"/>
</dbReference>
<dbReference type="GO" id="GO:0000030">
    <property type="term" value="F:mannosyltransferase activity"/>
    <property type="evidence" value="ECO:0007669"/>
    <property type="project" value="InterPro"/>
</dbReference>
<dbReference type="GO" id="GO:0009245">
    <property type="term" value="P:lipid A biosynthetic process"/>
    <property type="evidence" value="ECO:0007669"/>
    <property type="project" value="UniProtKB-UniRule"/>
</dbReference>
<dbReference type="GO" id="GO:0009103">
    <property type="term" value="P:lipopolysaccharide biosynthetic process"/>
    <property type="evidence" value="ECO:0007669"/>
    <property type="project" value="UniProtKB-KW"/>
</dbReference>
<dbReference type="GO" id="GO:0006493">
    <property type="term" value="P:protein O-linked glycosylation"/>
    <property type="evidence" value="ECO:0007669"/>
    <property type="project" value="InterPro"/>
</dbReference>
<dbReference type="GO" id="GO:0010041">
    <property type="term" value="P:response to iron(III) ion"/>
    <property type="evidence" value="ECO:0007669"/>
    <property type="project" value="TreeGrafter"/>
</dbReference>
<dbReference type="HAMAP" id="MF_01165">
    <property type="entry name" value="ArnT_transfer"/>
    <property type="match status" value="1"/>
</dbReference>
<dbReference type="InterPro" id="IPR022839">
    <property type="entry name" value="ArnT_tfrase"/>
</dbReference>
<dbReference type="InterPro" id="IPR003342">
    <property type="entry name" value="Glyco_trans_39/83"/>
</dbReference>
<dbReference type="InterPro" id="IPR050297">
    <property type="entry name" value="LipidA_mod_glycosyltrf_83"/>
</dbReference>
<dbReference type="NCBIfam" id="NF009784">
    <property type="entry name" value="PRK13279.1"/>
    <property type="match status" value="1"/>
</dbReference>
<dbReference type="PANTHER" id="PTHR33908">
    <property type="entry name" value="MANNOSYLTRANSFERASE YKCB-RELATED"/>
    <property type="match status" value="1"/>
</dbReference>
<dbReference type="PANTHER" id="PTHR33908:SF3">
    <property type="entry name" value="UNDECAPRENYL PHOSPHATE-ALPHA-4-AMINO-4-DEOXY-L-ARABINOSE ARABINOSYL TRANSFERASE"/>
    <property type="match status" value="1"/>
</dbReference>
<dbReference type="Pfam" id="PF02366">
    <property type="entry name" value="PMT"/>
    <property type="match status" value="1"/>
</dbReference>
<organism>
    <name type="scientific">Escherichia coli O139:H28 (strain E24377A / ETEC)</name>
    <dbReference type="NCBI Taxonomy" id="331111"/>
    <lineage>
        <taxon>Bacteria</taxon>
        <taxon>Pseudomonadati</taxon>
        <taxon>Pseudomonadota</taxon>
        <taxon>Gammaproteobacteria</taxon>
        <taxon>Enterobacterales</taxon>
        <taxon>Enterobacteriaceae</taxon>
        <taxon>Escherichia</taxon>
    </lineage>
</organism>
<reference key="1">
    <citation type="journal article" date="2008" name="J. Bacteriol.">
        <title>The pangenome structure of Escherichia coli: comparative genomic analysis of E. coli commensal and pathogenic isolates.</title>
        <authorList>
            <person name="Rasko D.A."/>
            <person name="Rosovitz M.J."/>
            <person name="Myers G.S.A."/>
            <person name="Mongodin E.F."/>
            <person name="Fricke W.F."/>
            <person name="Gajer P."/>
            <person name="Crabtree J."/>
            <person name="Sebaihia M."/>
            <person name="Thomson N.R."/>
            <person name="Chaudhuri R."/>
            <person name="Henderson I.R."/>
            <person name="Sperandio V."/>
            <person name="Ravel J."/>
        </authorList>
    </citation>
    <scope>NUCLEOTIDE SEQUENCE [LARGE SCALE GENOMIC DNA]</scope>
    <source>
        <strain>E24377A / ETEC</strain>
    </source>
</reference>
<keyword id="KW-0997">Cell inner membrane</keyword>
<keyword id="KW-1003">Cell membrane</keyword>
<keyword id="KW-0328">Glycosyltransferase</keyword>
<keyword id="KW-0441">Lipid A biosynthesis</keyword>
<keyword id="KW-0444">Lipid biosynthesis</keyword>
<keyword id="KW-0443">Lipid metabolism</keyword>
<keyword id="KW-0448">Lipopolysaccharide biosynthesis</keyword>
<keyword id="KW-0472">Membrane</keyword>
<keyword id="KW-1185">Reference proteome</keyword>
<keyword id="KW-0808">Transferase</keyword>
<keyword id="KW-0812">Transmembrane</keyword>
<keyword id="KW-1133">Transmembrane helix</keyword>
<accession>A7ZP75</accession>
<name>ARNT_ECO24</name>